<dbReference type="EC" id="3.5.1.47" evidence="1"/>
<dbReference type="EMBL" id="CP001175">
    <property type="protein sequence ID" value="ACK39952.1"/>
    <property type="molecule type" value="Genomic_DNA"/>
</dbReference>
<dbReference type="RefSeq" id="WP_012581603.1">
    <property type="nucleotide sequence ID" value="NC_011660.1"/>
</dbReference>
<dbReference type="SMR" id="B8DEC3"/>
<dbReference type="MEROPS" id="M20.A27"/>
<dbReference type="KEGG" id="lmh:LMHCC_1609"/>
<dbReference type="HOGENOM" id="CLU_023257_0_1_9"/>
<dbReference type="UniPathway" id="UPA00034">
    <property type="reaction ID" value="UER00024"/>
</dbReference>
<dbReference type="GO" id="GO:0050118">
    <property type="term" value="F:N-acetyldiaminopimelate deacetylase activity"/>
    <property type="evidence" value="ECO:0007669"/>
    <property type="project" value="UniProtKB-UniRule"/>
</dbReference>
<dbReference type="GO" id="GO:0019877">
    <property type="term" value="P:diaminopimelate biosynthetic process"/>
    <property type="evidence" value="ECO:0007669"/>
    <property type="project" value="UniProtKB-UniRule"/>
</dbReference>
<dbReference type="GO" id="GO:0009089">
    <property type="term" value="P:lysine biosynthetic process via diaminopimelate"/>
    <property type="evidence" value="ECO:0007669"/>
    <property type="project" value="UniProtKB-UniRule"/>
</dbReference>
<dbReference type="CDD" id="cd05670">
    <property type="entry name" value="M20_Acy1_YkuR-like"/>
    <property type="match status" value="1"/>
</dbReference>
<dbReference type="FunFam" id="3.30.70.360:FF:000001">
    <property type="entry name" value="N-acetyldiaminopimelate deacetylase"/>
    <property type="match status" value="1"/>
</dbReference>
<dbReference type="Gene3D" id="3.30.70.360">
    <property type="match status" value="1"/>
</dbReference>
<dbReference type="Gene3D" id="3.40.630.10">
    <property type="entry name" value="Zn peptidases"/>
    <property type="match status" value="1"/>
</dbReference>
<dbReference type="HAMAP" id="MF_01692">
    <property type="entry name" value="DapEL"/>
    <property type="match status" value="1"/>
</dbReference>
<dbReference type="InterPro" id="IPR023905">
    <property type="entry name" value="AcetylDAP_deacetylase"/>
</dbReference>
<dbReference type="InterPro" id="IPR017439">
    <property type="entry name" value="Amidohydrolase"/>
</dbReference>
<dbReference type="InterPro" id="IPR036264">
    <property type="entry name" value="Bact_exopeptidase_dim_dom"/>
</dbReference>
<dbReference type="InterPro" id="IPR002933">
    <property type="entry name" value="Peptidase_M20"/>
</dbReference>
<dbReference type="InterPro" id="IPR011650">
    <property type="entry name" value="Peptidase_M20_dimer"/>
</dbReference>
<dbReference type="NCBIfam" id="TIGR01891">
    <property type="entry name" value="amidohydrolases"/>
    <property type="match status" value="1"/>
</dbReference>
<dbReference type="PANTHER" id="PTHR11014:SF98">
    <property type="entry name" value="N-ACETYLDIAMINOPIMELATE DEACETYLASE"/>
    <property type="match status" value="1"/>
</dbReference>
<dbReference type="PANTHER" id="PTHR11014">
    <property type="entry name" value="PEPTIDASE M20 FAMILY MEMBER"/>
    <property type="match status" value="1"/>
</dbReference>
<dbReference type="Pfam" id="PF07687">
    <property type="entry name" value="M20_dimer"/>
    <property type="match status" value="1"/>
</dbReference>
<dbReference type="Pfam" id="PF01546">
    <property type="entry name" value="Peptidase_M20"/>
    <property type="match status" value="1"/>
</dbReference>
<dbReference type="PIRSF" id="PIRSF005962">
    <property type="entry name" value="Pept_M20D_amidohydro"/>
    <property type="match status" value="1"/>
</dbReference>
<dbReference type="SUPFAM" id="SSF55031">
    <property type="entry name" value="Bacterial exopeptidase dimerisation domain"/>
    <property type="match status" value="1"/>
</dbReference>
<dbReference type="SUPFAM" id="SSF53187">
    <property type="entry name" value="Zn-dependent exopeptidases"/>
    <property type="match status" value="1"/>
</dbReference>
<proteinExistence type="inferred from homology"/>
<keyword id="KW-0028">Amino-acid biosynthesis</keyword>
<keyword id="KW-0220">Diaminopimelate biosynthesis</keyword>
<keyword id="KW-0378">Hydrolase</keyword>
<keyword id="KW-0457">Lysine biosynthesis</keyword>
<feature type="chain" id="PRO_0000376774" description="N-acetyldiaminopimelate deacetylase">
    <location>
        <begin position="1"/>
        <end position="371"/>
    </location>
</feature>
<feature type="active site" evidence="1">
    <location>
        <position position="68"/>
    </location>
</feature>
<feature type="active site" description="Proton acceptor" evidence="1">
    <location>
        <position position="127"/>
    </location>
</feature>
<evidence type="ECO:0000255" key="1">
    <source>
        <dbReference type="HAMAP-Rule" id="MF_01692"/>
    </source>
</evidence>
<reference key="1">
    <citation type="journal article" date="2011" name="J. Bacteriol.">
        <title>Genome sequence of lineage III Listeria monocytogenes strain HCC23.</title>
        <authorList>
            <person name="Steele C.L."/>
            <person name="Donaldson J.R."/>
            <person name="Paul D."/>
            <person name="Banes M.M."/>
            <person name="Arick T."/>
            <person name="Bridges S.M."/>
            <person name="Lawrence M.L."/>
        </authorList>
    </citation>
    <scope>NUCLEOTIDE SEQUENCE [LARGE SCALE GENOMIC DNA]</scope>
    <source>
        <strain>HCC23</strain>
    </source>
</reference>
<accession>B8DEC3</accession>
<organism>
    <name type="scientific">Listeria monocytogenes serotype 4a (strain HCC23)</name>
    <dbReference type="NCBI Taxonomy" id="552536"/>
    <lineage>
        <taxon>Bacteria</taxon>
        <taxon>Bacillati</taxon>
        <taxon>Bacillota</taxon>
        <taxon>Bacilli</taxon>
        <taxon>Bacillales</taxon>
        <taxon>Listeriaceae</taxon>
        <taxon>Listeria</taxon>
    </lineage>
</organism>
<protein>
    <recommendedName>
        <fullName evidence="1">N-acetyldiaminopimelate deacetylase</fullName>
        <ecNumber evidence="1">3.5.1.47</ecNumber>
    </recommendedName>
</protein>
<comment type="function">
    <text evidence="1">Catalyzes the conversion of N-acetyl-diaminopimelate to diaminopimelate and acetate.</text>
</comment>
<comment type="catalytic activity">
    <reaction evidence="1">
        <text>N-acetyl-(2S,6S)-2,6-diaminopimelate + H2O = (2S,6S)-2,6-diaminopimelate + acetate</text>
        <dbReference type="Rhea" id="RHEA:20405"/>
        <dbReference type="ChEBI" id="CHEBI:15377"/>
        <dbReference type="ChEBI" id="CHEBI:30089"/>
        <dbReference type="ChEBI" id="CHEBI:57609"/>
        <dbReference type="ChEBI" id="CHEBI:58767"/>
        <dbReference type="EC" id="3.5.1.47"/>
    </reaction>
</comment>
<comment type="pathway">
    <text evidence="1">Amino-acid biosynthesis; L-lysine biosynthesis via DAP pathway; LL-2,6-diaminopimelate from (S)-tetrahydrodipicolinate (acetylase route): step 3/3.</text>
</comment>
<comment type="similarity">
    <text evidence="1">Belongs to the peptidase M20A family. N-acetyldiaminopimelate deacetylase subfamily.</text>
</comment>
<sequence>MLNEFIAIRRELHQIPETGYKELKTQAYLLDYISKLPSEHLEVKKWRTGILVLVKGNNPEKTIGYRTDIDALPITEETGLPFASKHPGNMHACGHDLHMSIALGVLTHFASKPAKDNLLFVFQPAEEGPGGAKPIMESAEFAEWRPDSIYGLHIAPEYKVGEIAIKPGLLFANTSELFISFKGKGGHAAYPHLANDMVVAASAFVGQMQTIISRNIDPMDSAVITIGRIHGGEIQNVIAETAYLDGTIRTLSPETMQIVWTRLKQLAKGWEEAYQCEVEFHPGSDYYQVDNDPVETEEFIHFLEEQYPESYVPARSAMTGEDFGYFLSEIKGFMFWLGVDSEYSLHHAKLSPKEEAIPFAIDVLIHFLESK</sequence>
<gene>
    <name type="ordered locus">LMHCC_1609</name>
</gene>
<name>DAPEL_LISMH</name>